<organism>
    <name type="scientific">Arabidopsis thaliana</name>
    <name type="common">Mouse-ear cress</name>
    <dbReference type="NCBI Taxonomy" id="3702"/>
    <lineage>
        <taxon>Eukaryota</taxon>
        <taxon>Viridiplantae</taxon>
        <taxon>Streptophyta</taxon>
        <taxon>Embryophyta</taxon>
        <taxon>Tracheophyta</taxon>
        <taxon>Spermatophyta</taxon>
        <taxon>Magnoliopsida</taxon>
        <taxon>eudicotyledons</taxon>
        <taxon>Gunneridae</taxon>
        <taxon>Pentapetalae</taxon>
        <taxon>rosids</taxon>
        <taxon>malvids</taxon>
        <taxon>Brassicales</taxon>
        <taxon>Brassicaceae</taxon>
        <taxon>Camelineae</taxon>
        <taxon>Arabidopsis</taxon>
    </lineage>
</organism>
<name>PSAI_ARATH</name>
<feature type="chain" id="PRO_0000194643" description="Photosystem I reaction center subunit VIII">
    <location>
        <begin position="1"/>
        <end position="37"/>
    </location>
</feature>
<feature type="transmembrane region" description="Helical" evidence="2">
    <location>
        <begin position="9"/>
        <end position="29"/>
    </location>
</feature>
<feature type="helix" evidence="4">
    <location>
        <begin position="8"/>
        <end position="16"/>
    </location>
</feature>
<feature type="helix" evidence="4">
    <location>
        <begin position="18"/>
        <end position="31"/>
    </location>
</feature>
<geneLocation type="chloroplast"/>
<gene>
    <name type="primary">psaI</name>
    <name type="ordered locus">AtCg00510</name>
</gene>
<accession>P56768</accession>
<sequence>MTTFNNLPSIFVPLVGLVFPAIAMASLFLHIQKNKIF</sequence>
<comment type="function">
    <text evidence="1">May help in the organization of the PsaL subunit.</text>
</comment>
<comment type="subcellular location">
    <subcellularLocation>
        <location evidence="1">Plastid</location>
        <location evidence="1">Chloroplast thylakoid membrane</location>
        <topology evidence="1">Single-pass membrane protein</topology>
    </subcellularLocation>
</comment>
<comment type="similarity">
    <text evidence="3">Belongs to the PsaI family.</text>
</comment>
<evidence type="ECO:0000250" key="1"/>
<evidence type="ECO:0000255" key="2"/>
<evidence type="ECO:0000305" key="3"/>
<evidence type="ECO:0007829" key="4">
    <source>
        <dbReference type="PDB" id="8J6Z"/>
    </source>
</evidence>
<keyword id="KW-0002">3D-structure</keyword>
<keyword id="KW-0150">Chloroplast</keyword>
<keyword id="KW-0472">Membrane</keyword>
<keyword id="KW-0602">Photosynthesis</keyword>
<keyword id="KW-0603">Photosystem I</keyword>
<keyword id="KW-0934">Plastid</keyword>
<keyword id="KW-1185">Reference proteome</keyword>
<keyword id="KW-0793">Thylakoid</keyword>
<keyword id="KW-0812">Transmembrane</keyword>
<keyword id="KW-1133">Transmembrane helix</keyword>
<reference key="1">
    <citation type="journal article" date="1999" name="DNA Res.">
        <title>Complete structure of the chloroplast genome of Arabidopsis thaliana.</title>
        <authorList>
            <person name="Sato S."/>
            <person name="Nakamura Y."/>
            <person name="Kaneko T."/>
            <person name="Asamizu E."/>
            <person name="Tabata S."/>
        </authorList>
    </citation>
    <scope>NUCLEOTIDE SEQUENCE [LARGE SCALE GENOMIC DNA]</scope>
    <source>
        <strain>cv. Columbia</strain>
    </source>
</reference>
<proteinExistence type="evidence at protein level"/>
<dbReference type="EMBL" id="AP000423">
    <property type="protein sequence ID" value="BAA84395.1"/>
    <property type="molecule type" value="Genomic_DNA"/>
</dbReference>
<dbReference type="RefSeq" id="NP_051069.1">
    <property type="nucleotide sequence ID" value="NC_000932.1"/>
</dbReference>
<dbReference type="PDB" id="7WFD">
    <property type="method" value="EM"/>
    <property type="resolution" value="3.25 A"/>
    <property type="chains" value="AI=1-37"/>
</dbReference>
<dbReference type="PDB" id="7WFE">
    <property type="method" value="EM"/>
    <property type="resolution" value="3.25 A"/>
    <property type="chains" value="BI=1-37"/>
</dbReference>
<dbReference type="PDB" id="7WG5">
    <property type="method" value="EM"/>
    <property type="resolution" value="3.89 A"/>
    <property type="chains" value="AI/BI=1-37"/>
</dbReference>
<dbReference type="PDB" id="8J6Z">
    <property type="method" value="EM"/>
    <property type="resolution" value="2.79 A"/>
    <property type="chains" value="I=1-37"/>
</dbReference>
<dbReference type="PDB" id="8J7A">
    <property type="method" value="EM"/>
    <property type="resolution" value="3.06 A"/>
    <property type="chains" value="I=1-37"/>
</dbReference>
<dbReference type="PDB" id="8J7B">
    <property type="method" value="EM"/>
    <property type="resolution" value="3.22 A"/>
    <property type="chains" value="I=1-37"/>
</dbReference>
<dbReference type="PDBsum" id="7WFD"/>
<dbReference type="PDBsum" id="7WFE"/>
<dbReference type="PDBsum" id="7WG5"/>
<dbReference type="PDBsum" id="8J6Z"/>
<dbReference type="PDBsum" id="8J7A"/>
<dbReference type="PDBsum" id="8J7B"/>
<dbReference type="EMDB" id="EMD-32462"/>
<dbReference type="EMDB" id="EMD-32463"/>
<dbReference type="EMDB" id="EMD-32477"/>
<dbReference type="EMDB" id="EMD-36021"/>
<dbReference type="EMDB" id="EMD-36036"/>
<dbReference type="EMDB" id="EMD-36037"/>
<dbReference type="SMR" id="P56768"/>
<dbReference type="FunCoup" id="P56768">
    <property type="interactions" value="19"/>
</dbReference>
<dbReference type="STRING" id="3702.P56768"/>
<dbReference type="TCDB" id="5.B.4.1.1">
    <property type="family name" value="the plant photosystem i supercomplex (psi) family"/>
</dbReference>
<dbReference type="PaxDb" id="3702-ATCG00510.1"/>
<dbReference type="EnsemblPlants" id="ATCG00510.1">
    <property type="protein sequence ID" value="ATCG00510.1"/>
    <property type="gene ID" value="ATCG00510"/>
</dbReference>
<dbReference type="GeneID" id="844753"/>
<dbReference type="Gramene" id="ATCG00510.1">
    <property type="protein sequence ID" value="ATCG00510.1"/>
    <property type="gene ID" value="ATCG00510"/>
</dbReference>
<dbReference type="KEGG" id="ath:ArthCp032"/>
<dbReference type="Araport" id="ATCG00510"/>
<dbReference type="TAIR" id="ATCG00510">
    <property type="gene designation" value="PSAI"/>
</dbReference>
<dbReference type="eggNOG" id="ENOG502SE4W">
    <property type="taxonomic scope" value="Eukaryota"/>
</dbReference>
<dbReference type="HOGENOM" id="CLU_215282_1_0_1"/>
<dbReference type="InParanoid" id="P56768"/>
<dbReference type="PRO" id="PR:P56768"/>
<dbReference type="Proteomes" id="UP000006548">
    <property type="component" value="Chloroplast Pltd"/>
</dbReference>
<dbReference type="ExpressionAtlas" id="P56768">
    <property type="expression patterns" value="baseline and differential"/>
</dbReference>
<dbReference type="GO" id="GO:0009535">
    <property type="term" value="C:chloroplast thylakoid membrane"/>
    <property type="evidence" value="ECO:0007669"/>
    <property type="project" value="UniProtKB-SubCell"/>
</dbReference>
<dbReference type="GO" id="GO:0009522">
    <property type="term" value="C:photosystem I"/>
    <property type="evidence" value="ECO:0007669"/>
    <property type="project" value="UniProtKB-KW"/>
</dbReference>
<dbReference type="GO" id="GO:0015979">
    <property type="term" value="P:photosynthesis"/>
    <property type="evidence" value="ECO:0007669"/>
    <property type="project" value="UniProtKB-UniRule"/>
</dbReference>
<dbReference type="HAMAP" id="MF_00431">
    <property type="entry name" value="PSI_PsaI"/>
    <property type="match status" value="1"/>
</dbReference>
<dbReference type="InterPro" id="IPR001302">
    <property type="entry name" value="PSI_PsaI"/>
</dbReference>
<dbReference type="InterPro" id="IPR036357">
    <property type="entry name" value="PSI_PsaI_sf"/>
</dbReference>
<dbReference type="NCBIfam" id="TIGR03052">
    <property type="entry name" value="PS_I_psaI"/>
    <property type="match status" value="1"/>
</dbReference>
<dbReference type="PANTHER" id="PTHR35775">
    <property type="match status" value="1"/>
</dbReference>
<dbReference type="PANTHER" id="PTHR35775:SF2">
    <property type="entry name" value="PHOTOSYSTEM I REACTION CENTER SUBUNIT VIII"/>
    <property type="match status" value="1"/>
</dbReference>
<dbReference type="Pfam" id="PF00796">
    <property type="entry name" value="PSI_8"/>
    <property type="match status" value="1"/>
</dbReference>
<dbReference type="SUPFAM" id="SSF81540">
    <property type="entry name" value="Subunit VIII of photosystem I reaction centre, PsaI"/>
    <property type="match status" value="1"/>
</dbReference>
<protein>
    <recommendedName>
        <fullName>Photosystem I reaction center subunit VIII</fullName>
        <shortName>PSI-I</shortName>
    </recommendedName>
</protein>